<name>CH60_THEP1</name>
<feature type="chain" id="PRO_1000025845" description="Chaperonin GroEL">
    <location>
        <begin position="1"/>
        <end position="538"/>
    </location>
</feature>
<feature type="binding site" evidence="1">
    <location>
        <begin position="29"/>
        <end position="32"/>
    </location>
    <ligand>
        <name>ATP</name>
        <dbReference type="ChEBI" id="CHEBI:30616"/>
    </ligand>
</feature>
<feature type="binding site" evidence="1">
    <location>
        <begin position="86"/>
        <end position="90"/>
    </location>
    <ligand>
        <name>ATP</name>
        <dbReference type="ChEBI" id="CHEBI:30616"/>
    </ligand>
</feature>
<feature type="binding site" evidence="1">
    <location>
        <position position="413"/>
    </location>
    <ligand>
        <name>ATP</name>
        <dbReference type="ChEBI" id="CHEBI:30616"/>
    </ligand>
</feature>
<feature type="binding site" evidence="1">
    <location>
        <begin position="479"/>
        <end position="481"/>
    </location>
    <ligand>
        <name>ATP</name>
        <dbReference type="ChEBI" id="CHEBI:30616"/>
    </ligand>
</feature>
<feature type="binding site" evidence="1">
    <location>
        <position position="495"/>
    </location>
    <ligand>
        <name>ATP</name>
        <dbReference type="ChEBI" id="CHEBI:30616"/>
    </ligand>
</feature>
<comment type="function">
    <text evidence="1">Together with its co-chaperonin GroES, plays an essential role in assisting protein folding. The GroEL-GroES system forms a nano-cage that allows encapsulation of the non-native substrate proteins and provides a physical environment optimized to promote and accelerate protein folding.</text>
</comment>
<comment type="catalytic activity">
    <reaction evidence="1">
        <text>ATP + H2O + a folded polypeptide = ADP + phosphate + an unfolded polypeptide.</text>
        <dbReference type="EC" id="5.6.1.7"/>
    </reaction>
</comment>
<comment type="subunit">
    <text evidence="1">Forms a cylinder of 14 subunits composed of two heptameric rings stacked back-to-back. Interacts with the co-chaperonin GroES.</text>
</comment>
<comment type="subcellular location">
    <subcellularLocation>
        <location evidence="1">Cytoplasm</location>
    </subcellularLocation>
</comment>
<comment type="similarity">
    <text evidence="1">Belongs to the chaperonin (HSP60) family.</text>
</comment>
<dbReference type="EC" id="5.6.1.7" evidence="1"/>
<dbReference type="EMBL" id="CP000702">
    <property type="protein sequence ID" value="ABQ46439.1"/>
    <property type="molecule type" value="Genomic_DNA"/>
</dbReference>
<dbReference type="RefSeq" id="WP_008192177.1">
    <property type="nucleotide sequence ID" value="NC_009486.1"/>
</dbReference>
<dbReference type="SMR" id="A5IJR6"/>
<dbReference type="STRING" id="390874.Tpet_0415"/>
<dbReference type="KEGG" id="tpt:Tpet_0415"/>
<dbReference type="eggNOG" id="COG0459">
    <property type="taxonomic scope" value="Bacteria"/>
</dbReference>
<dbReference type="HOGENOM" id="CLU_016503_3_0_0"/>
<dbReference type="Proteomes" id="UP000006558">
    <property type="component" value="Chromosome"/>
</dbReference>
<dbReference type="GO" id="GO:0005737">
    <property type="term" value="C:cytoplasm"/>
    <property type="evidence" value="ECO:0007669"/>
    <property type="project" value="UniProtKB-SubCell"/>
</dbReference>
<dbReference type="GO" id="GO:0005524">
    <property type="term" value="F:ATP binding"/>
    <property type="evidence" value="ECO:0007669"/>
    <property type="project" value="UniProtKB-UniRule"/>
</dbReference>
<dbReference type="GO" id="GO:0140662">
    <property type="term" value="F:ATP-dependent protein folding chaperone"/>
    <property type="evidence" value="ECO:0007669"/>
    <property type="project" value="InterPro"/>
</dbReference>
<dbReference type="GO" id="GO:0016853">
    <property type="term" value="F:isomerase activity"/>
    <property type="evidence" value="ECO:0007669"/>
    <property type="project" value="UniProtKB-KW"/>
</dbReference>
<dbReference type="GO" id="GO:0051082">
    <property type="term" value="F:unfolded protein binding"/>
    <property type="evidence" value="ECO:0007669"/>
    <property type="project" value="UniProtKB-UniRule"/>
</dbReference>
<dbReference type="GO" id="GO:0042026">
    <property type="term" value="P:protein refolding"/>
    <property type="evidence" value="ECO:0007669"/>
    <property type="project" value="UniProtKB-UniRule"/>
</dbReference>
<dbReference type="CDD" id="cd03344">
    <property type="entry name" value="GroEL"/>
    <property type="match status" value="1"/>
</dbReference>
<dbReference type="FunFam" id="1.10.560.10:FF:000001">
    <property type="entry name" value="60 kDa chaperonin"/>
    <property type="match status" value="1"/>
</dbReference>
<dbReference type="FunFam" id="3.50.7.10:FF:000001">
    <property type="entry name" value="60 kDa chaperonin"/>
    <property type="match status" value="1"/>
</dbReference>
<dbReference type="Gene3D" id="3.50.7.10">
    <property type="entry name" value="GroEL"/>
    <property type="match status" value="1"/>
</dbReference>
<dbReference type="Gene3D" id="1.10.560.10">
    <property type="entry name" value="GroEL-like equatorial domain"/>
    <property type="match status" value="1"/>
</dbReference>
<dbReference type="Gene3D" id="3.30.260.10">
    <property type="entry name" value="TCP-1-like chaperonin intermediate domain"/>
    <property type="match status" value="1"/>
</dbReference>
<dbReference type="HAMAP" id="MF_00600">
    <property type="entry name" value="CH60"/>
    <property type="match status" value="1"/>
</dbReference>
<dbReference type="InterPro" id="IPR018370">
    <property type="entry name" value="Chaperonin_Cpn60_CS"/>
</dbReference>
<dbReference type="InterPro" id="IPR001844">
    <property type="entry name" value="Cpn60/GroEL"/>
</dbReference>
<dbReference type="InterPro" id="IPR002423">
    <property type="entry name" value="Cpn60/GroEL/TCP-1"/>
</dbReference>
<dbReference type="InterPro" id="IPR027409">
    <property type="entry name" value="GroEL-like_apical_dom_sf"/>
</dbReference>
<dbReference type="InterPro" id="IPR027413">
    <property type="entry name" value="GROEL-like_equatorial_sf"/>
</dbReference>
<dbReference type="InterPro" id="IPR027410">
    <property type="entry name" value="TCP-1-like_intermed_sf"/>
</dbReference>
<dbReference type="NCBIfam" id="TIGR02348">
    <property type="entry name" value="GroEL"/>
    <property type="match status" value="1"/>
</dbReference>
<dbReference type="NCBIfam" id="NF000592">
    <property type="entry name" value="PRK00013.1"/>
    <property type="match status" value="1"/>
</dbReference>
<dbReference type="NCBIfam" id="NF009487">
    <property type="entry name" value="PRK12849.1"/>
    <property type="match status" value="1"/>
</dbReference>
<dbReference type="NCBIfam" id="NF009488">
    <property type="entry name" value="PRK12850.1"/>
    <property type="match status" value="1"/>
</dbReference>
<dbReference type="NCBIfam" id="NF009489">
    <property type="entry name" value="PRK12851.1"/>
    <property type="match status" value="1"/>
</dbReference>
<dbReference type="PANTHER" id="PTHR45633">
    <property type="entry name" value="60 KDA HEAT SHOCK PROTEIN, MITOCHONDRIAL"/>
    <property type="match status" value="1"/>
</dbReference>
<dbReference type="Pfam" id="PF00118">
    <property type="entry name" value="Cpn60_TCP1"/>
    <property type="match status" value="1"/>
</dbReference>
<dbReference type="PRINTS" id="PR00298">
    <property type="entry name" value="CHAPERONIN60"/>
</dbReference>
<dbReference type="SUPFAM" id="SSF52029">
    <property type="entry name" value="GroEL apical domain-like"/>
    <property type="match status" value="1"/>
</dbReference>
<dbReference type="SUPFAM" id="SSF48592">
    <property type="entry name" value="GroEL equatorial domain-like"/>
    <property type="match status" value="1"/>
</dbReference>
<dbReference type="SUPFAM" id="SSF54849">
    <property type="entry name" value="GroEL-intermediate domain like"/>
    <property type="match status" value="1"/>
</dbReference>
<dbReference type="PROSITE" id="PS00296">
    <property type="entry name" value="CHAPERONINS_CPN60"/>
    <property type="match status" value="1"/>
</dbReference>
<proteinExistence type="inferred from homology"/>
<sequence length="538" mass="58076">MPKILKFNEEARRALERGVDKVANAVKVTLGPKGRNVVIEKSWGSPTITNDGVSIAKEIELEDKFENLGAQLVKEVASKTNDVAGDGTTTATVLAQAMIKEGLKNVAAGANPILLKRGIDKAVEKAVEEIKKVSKKLSGREDIAHVAAISANSAEIGELIAEAMDKVGEDGVITVEDSKTLETYVEFTEGMQFDRGYISPYFVTDAEKMEVVLKEPFILITDRKLSAVKPLIPILEKVAQTGRPLLVIAEDVEGEVLTTLVLNKLKGTLQSCAVKAPGFGERRKAMLQDIAILTGGQVASEELGINLEDLTLEDLGRADLVRVKKDETIIIGGKGDPEAIKKRIAQIKAQIEETTSEYEKETLQERMAKLAGGVAVIKVGAATETELKEKKHRIEDALSATRAAVEEGIVPGGGVTLLRARKAVEKVIEELEGDEKIGAQIVYKALSAPIKQIAENAGYDGAVIIEKILSNDDPAYGFDALRGEYCNMFERGIIDPAKVTRSALQNAASIAGMLLTTEVLIVEKPEEKKETPSIPEEF</sequence>
<organism>
    <name type="scientific">Thermotoga petrophila (strain ATCC BAA-488 / DSM 13995 / JCM 10881 / RKU-1)</name>
    <dbReference type="NCBI Taxonomy" id="390874"/>
    <lineage>
        <taxon>Bacteria</taxon>
        <taxon>Thermotogati</taxon>
        <taxon>Thermotogota</taxon>
        <taxon>Thermotogae</taxon>
        <taxon>Thermotogales</taxon>
        <taxon>Thermotogaceae</taxon>
        <taxon>Thermotoga</taxon>
    </lineage>
</organism>
<protein>
    <recommendedName>
        <fullName evidence="1">Chaperonin GroEL</fullName>
        <ecNumber evidence="1">5.6.1.7</ecNumber>
    </recommendedName>
    <alternativeName>
        <fullName evidence="1">60 kDa chaperonin</fullName>
    </alternativeName>
    <alternativeName>
        <fullName evidence="1">Chaperonin-60</fullName>
        <shortName evidence="1">Cpn60</shortName>
    </alternativeName>
</protein>
<evidence type="ECO:0000255" key="1">
    <source>
        <dbReference type="HAMAP-Rule" id="MF_00600"/>
    </source>
</evidence>
<keyword id="KW-0067">ATP-binding</keyword>
<keyword id="KW-0143">Chaperone</keyword>
<keyword id="KW-0963">Cytoplasm</keyword>
<keyword id="KW-0413">Isomerase</keyword>
<keyword id="KW-0547">Nucleotide-binding</keyword>
<accession>A5IJR6</accession>
<reference key="1">
    <citation type="submission" date="2007-05" db="EMBL/GenBank/DDBJ databases">
        <title>Complete sequence of Thermotoga petrophila RKU-1.</title>
        <authorList>
            <consortium name="US DOE Joint Genome Institute"/>
            <person name="Copeland A."/>
            <person name="Lucas S."/>
            <person name="Lapidus A."/>
            <person name="Barry K."/>
            <person name="Glavina del Rio T."/>
            <person name="Dalin E."/>
            <person name="Tice H."/>
            <person name="Pitluck S."/>
            <person name="Sims D."/>
            <person name="Brettin T."/>
            <person name="Bruce D."/>
            <person name="Detter J.C."/>
            <person name="Han C."/>
            <person name="Tapia R."/>
            <person name="Schmutz J."/>
            <person name="Larimer F."/>
            <person name="Land M."/>
            <person name="Hauser L."/>
            <person name="Kyrpides N."/>
            <person name="Mikhailova N."/>
            <person name="Nelson K."/>
            <person name="Gogarten J.P."/>
            <person name="Noll K."/>
            <person name="Richardson P."/>
        </authorList>
    </citation>
    <scope>NUCLEOTIDE SEQUENCE [LARGE SCALE GENOMIC DNA]</scope>
    <source>
        <strain>ATCC BAA-488 / DSM 13995 / JCM 10881 / RKU-1</strain>
    </source>
</reference>
<gene>
    <name evidence="1" type="primary">groEL</name>
    <name evidence="1" type="synonym">groL</name>
    <name type="ordered locus">Tpet_0415</name>
</gene>